<feature type="chain" id="PRO_0000408797" description="Restriction of telomere capping protein 4">
    <location>
        <begin position="1"/>
        <end position="374"/>
    </location>
</feature>
<feature type="region of interest" description="Disordered" evidence="2">
    <location>
        <begin position="1"/>
        <end position="31"/>
    </location>
</feature>
<feature type="region of interest" description="Disordered" evidence="2">
    <location>
        <begin position="75"/>
        <end position="106"/>
    </location>
</feature>
<feature type="region of interest" description="Disordered" evidence="2">
    <location>
        <begin position="129"/>
        <end position="180"/>
    </location>
</feature>
<feature type="compositionally biased region" description="Acidic residues" evidence="2">
    <location>
        <begin position="93"/>
        <end position="106"/>
    </location>
</feature>
<reference key="1">
    <citation type="journal article" date="2009" name="Genome Res.">
        <title>Comparative genomics of protoploid Saccharomycetaceae.</title>
        <authorList>
            <consortium name="The Genolevures Consortium"/>
            <person name="Souciet J.-L."/>
            <person name="Dujon B."/>
            <person name="Gaillardin C."/>
            <person name="Johnston M."/>
            <person name="Baret P.V."/>
            <person name="Cliften P."/>
            <person name="Sherman D.J."/>
            <person name="Weissenbach J."/>
            <person name="Westhof E."/>
            <person name="Wincker P."/>
            <person name="Jubin C."/>
            <person name="Poulain J."/>
            <person name="Barbe V."/>
            <person name="Segurens B."/>
            <person name="Artiguenave F."/>
            <person name="Anthouard V."/>
            <person name="Vacherie B."/>
            <person name="Val M.-E."/>
            <person name="Fulton R.S."/>
            <person name="Minx P."/>
            <person name="Wilson R."/>
            <person name="Durrens P."/>
            <person name="Jean G."/>
            <person name="Marck C."/>
            <person name="Martin T."/>
            <person name="Nikolski M."/>
            <person name="Rolland T."/>
            <person name="Seret M.-L."/>
            <person name="Casaregola S."/>
            <person name="Despons L."/>
            <person name="Fairhead C."/>
            <person name="Fischer G."/>
            <person name="Lafontaine I."/>
            <person name="Leh V."/>
            <person name="Lemaire M."/>
            <person name="de Montigny J."/>
            <person name="Neuveglise C."/>
            <person name="Thierry A."/>
            <person name="Blanc-Lenfle I."/>
            <person name="Bleykasten C."/>
            <person name="Diffels J."/>
            <person name="Fritsch E."/>
            <person name="Frangeul L."/>
            <person name="Goeffon A."/>
            <person name="Jauniaux N."/>
            <person name="Kachouri-Lafond R."/>
            <person name="Payen C."/>
            <person name="Potier S."/>
            <person name="Pribylova L."/>
            <person name="Ozanne C."/>
            <person name="Richard G.-F."/>
            <person name="Sacerdot C."/>
            <person name="Straub M.-L."/>
            <person name="Talla E."/>
        </authorList>
    </citation>
    <scope>NUCLEOTIDE SEQUENCE [LARGE SCALE GENOMIC DNA]</scope>
    <source>
        <strain>ATCC 56472 / CBS 6340 / NRRL Y-8284</strain>
    </source>
</reference>
<gene>
    <name type="primary">RTC4</name>
    <name type="ordered locus">KLTH0F02926g</name>
</gene>
<organism>
    <name type="scientific">Lachancea thermotolerans (strain ATCC 56472 / CBS 6340 / NRRL Y-8284)</name>
    <name type="common">Yeast</name>
    <name type="synonym">Kluyveromyces thermotolerans</name>
    <dbReference type="NCBI Taxonomy" id="559295"/>
    <lineage>
        <taxon>Eukaryota</taxon>
        <taxon>Fungi</taxon>
        <taxon>Dikarya</taxon>
        <taxon>Ascomycota</taxon>
        <taxon>Saccharomycotina</taxon>
        <taxon>Saccharomycetes</taxon>
        <taxon>Saccharomycetales</taxon>
        <taxon>Saccharomycetaceae</taxon>
        <taxon>Lachancea</taxon>
    </lineage>
</organism>
<name>RTC4_LACTC</name>
<keyword id="KW-0963">Cytoplasm</keyword>
<keyword id="KW-0539">Nucleus</keyword>
<keyword id="KW-1185">Reference proteome</keyword>
<comment type="function">
    <text evidence="1">May be involved in a process influencing telomere capping.</text>
</comment>
<comment type="subcellular location">
    <subcellularLocation>
        <location evidence="1">Cytoplasm</location>
    </subcellularLocation>
    <subcellularLocation>
        <location evidence="1">Nucleus</location>
    </subcellularLocation>
</comment>
<comment type="similarity">
    <text evidence="3">Belongs to the RTC4 family.</text>
</comment>
<protein>
    <recommendedName>
        <fullName>Restriction of telomere capping protein 4</fullName>
    </recommendedName>
</protein>
<sequence>MAPEHAHYNGSKKIRSLREDKLASGAKARSRYGEACFQRGRVIKEARGQHTALRAGKDYETNLRRKREFRVPLELEPGRLRVQETTPSLDSAGTDDQDSENAESDGDLPIEVICDLEVIPQDVDEQELQRLRRENDRSSSPAGANEGIDDEEAGEEKVSFPSPQHSKHSHGPTGSEQEHFQRVSCVRHSYMQKLKLPQPLLAEELLERTLKYFPLVEKILSGQHPSMYYDHARSAFKRSRRAVLSIDEFRRLDLSLFTAGYYGVRRQMRVAVEVLHHYRDLIARQNNRVLRWWGVSDFAQYVLAPELLSALCQEEMNLPTLEDAWDVMEATTEFGLLVADDGPLEEWEVPAHLARLEAAGHSSNLREDPSNDKR</sequence>
<proteinExistence type="inferred from homology"/>
<evidence type="ECO:0000250" key="1"/>
<evidence type="ECO:0000256" key="2">
    <source>
        <dbReference type="SAM" id="MobiDB-lite"/>
    </source>
</evidence>
<evidence type="ECO:0000305" key="3"/>
<accession>C5DKA0</accession>
<dbReference type="EMBL" id="CU928170">
    <property type="protein sequence ID" value="CAR23901.1"/>
    <property type="molecule type" value="Genomic_DNA"/>
</dbReference>
<dbReference type="RefSeq" id="XP_002554338.1">
    <property type="nucleotide sequence ID" value="XM_002554292.1"/>
</dbReference>
<dbReference type="FunCoup" id="C5DKA0">
    <property type="interactions" value="31"/>
</dbReference>
<dbReference type="STRING" id="559295.C5DKA0"/>
<dbReference type="GeneID" id="8292530"/>
<dbReference type="KEGG" id="lth:KLTH0F02926g"/>
<dbReference type="eggNOG" id="ENOG502S1RG">
    <property type="taxonomic scope" value="Eukaryota"/>
</dbReference>
<dbReference type="HOGENOM" id="CLU_739810_0_0_1"/>
<dbReference type="InParanoid" id="C5DKA0"/>
<dbReference type="OMA" id="VEIMHRY"/>
<dbReference type="OrthoDB" id="128308at2759"/>
<dbReference type="Proteomes" id="UP000002036">
    <property type="component" value="Chromosome F"/>
</dbReference>
<dbReference type="GO" id="GO:0005737">
    <property type="term" value="C:cytoplasm"/>
    <property type="evidence" value="ECO:0007669"/>
    <property type="project" value="UniProtKB-SubCell"/>
</dbReference>
<dbReference type="GO" id="GO:0005634">
    <property type="term" value="C:nucleus"/>
    <property type="evidence" value="ECO:0007669"/>
    <property type="project" value="UniProtKB-SubCell"/>
</dbReference>
<dbReference type="InterPro" id="IPR039024">
    <property type="entry name" value="RTC4"/>
</dbReference>
<dbReference type="InterPro" id="IPR028094">
    <property type="entry name" value="RTC4_C"/>
</dbReference>
<dbReference type="PANTHER" id="PTHR41391">
    <property type="entry name" value="RESTRICTION OF TELOMERE CAPPING PROTEIN 4"/>
    <property type="match status" value="1"/>
</dbReference>
<dbReference type="PANTHER" id="PTHR41391:SF1">
    <property type="entry name" value="RESTRICTION OF TELOMERE CAPPING PROTEIN 4"/>
    <property type="match status" value="1"/>
</dbReference>
<dbReference type="Pfam" id="PF14474">
    <property type="entry name" value="RTC4"/>
    <property type="match status" value="1"/>
</dbReference>
<dbReference type="SMART" id="SM01312">
    <property type="entry name" value="RTC4"/>
    <property type="match status" value="1"/>
</dbReference>